<comment type="function">
    <text evidence="1">Digests double-stranded RNA. Involved in the processing of primary rRNA transcript to yield the immediate precursors to the large and small rRNAs (23S and 16S). Processes some mRNAs, and tRNAs when they are encoded in the rRNA operon. Processes pre-crRNA and tracrRNA of type II CRISPR loci if present in the organism.</text>
</comment>
<comment type="catalytic activity">
    <reaction evidence="1">
        <text>Endonucleolytic cleavage to 5'-phosphomonoester.</text>
        <dbReference type="EC" id="3.1.26.3"/>
    </reaction>
</comment>
<comment type="cofactor">
    <cofactor evidence="1">
        <name>Mg(2+)</name>
        <dbReference type="ChEBI" id="CHEBI:18420"/>
    </cofactor>
</comment>
<comment type="subunit">
    <text evidence="1">Homodimer.</text>
</comment>
<comment type="subcellular location">
    <subcellularLocation>
        <location evidence="1">Cytoplasm</location>
    </subcellularLocation>
</comment>
<comment type="similarity">
    <text evidence="1">Belongs to the ribonuclease III family.</text>
</comment>
<accession>Q03VW5</accession>
<name>RNC_LEUMM</name>
<keyword id="KW-0963">Cytoplasm</keyword>
<keyword id="KW-0255">Endonuclease</keyword>
<keyword id="KW-0378">Hydrolase</keyword>
<keyword id="KW-0460">Magnesium</keyword>
<keyword id="KW-0479">Metal-binding</keyword>
<keyword id="KW-0507">mRNA processing</keyword>
<keyword id="KW-0540">Nuclease</keyword>
<keyword id="KW-1185">Reference proteome</keyword>
<keyword id="KW-0694">RNA-binding</keyword>
<keyword id="KW-0698">rRNA processing</keyword>
<keyword id="KW-0699">rRNA-binding</keyword>
<keyword id="KW-0819">tRNA processing</keyword>
<dbReference type="EC" id="3.1.26.3" evidence="1"/>
<dbReference type="EMBL" id="CP000414">
    <property type="protein sequence ID" value="ABJ62657.1"/>
    <property type="molecule type" value="Genomic_DNA"/>
</dbReference>
<dbReference type="RefSeq" id="WP_011680226.1">
    <property type="nucleotide sequence ID" value="NC_008531.1"/>
</dbReference>
<dbReference type="SMR" id="Q03VW5"/>
<dbReference type="EnsemblBacteria" id="ABJ62657">
    <property type="protein sequence ID" value="ABJ62657"/>
    <property type="gene ID" value="LEUM_1565"/>
</dbReference>
<dbReference type="GeneID" id="97503456"/>
<dbReference type="KEGG" id="lme:LEUM_1565"/>
<dbReference type="eggNOG" id="COG0571">
    <property type="taxonomic scope" value="Bacteria"/>
</dbReference>
<dbReference type="HOGENOM" id="CLU_000907_1_3_9"/>
<dbReference type="Proteomes" id="UP000000362">
    <property type="component" value="Chromosome"/>
</dbReference>
<dbReference type="GO" id="GO:0005737">
    <property type="term" value="C:cytoplasm"/>
    <property type="evidence" value="ECO:0007669"/>
    <property type="project" value="UniProtKB-SubCell"/>
</dbReference>
<dbReference type="GO" id="GO:0003725">
    <property type="term" value="F:double-stranded RNA binding"/>
    <property type="evidence" value="ECO:0007669"/>
    <property type="project" value="TreeGrafter"/>
</dbReference>
<dbReference type="GO" id="GO:0046872">
    <property type="term" value="F:metal ion binding"/>
    <property type="evidence" value="ECO:0007669"/>
    <property type="project" value="UniProtKB-KW"/>
</dbReference>
<dbReference type="GO" id="GO:0004525">
    <property type="term" value="F:ribonuclease III activity"/>
    <property type="evidence" value="ECO:0007669"/>
    <property type="project" value="UniProtKB-UniRule"/>
</dbReference>
<dbReference type="GO" id="GO:0019843">
    <property type="term" value="F:rRNA binding"/>
    <property type="evidence" value="ECO:0007669"/>
    <property type="project" value="UniProtKB-KW"/>
</dbReference>
<dbReference type="GO" id="GO:0006397">
    <property type="term" value="P:mRNA processing"/>
    <property type="evidence" value="ECO:0007669"/>
    <property type="project" value="UniProtKB-UniRule"/>
</dbReference>
<dbReference type="GO" id="GO:0010468">
    <property type="term" value="P:regulation of gene expression"/>
    <property type="evidence" value="ECO:0007669"/>
    <property type="project" value="TreeGrafter"/>
</dbReference>
<dbReference type="GO" id="GO:0006364">
    <property type="term" value="P:rRNA processing"/>
    <property type="evidence" value="ECO:0007669"/>
    <property type="project" value="UniProtKB-UniRule"/>
</dbReference>
<dbReference type="GO" id="GO:0008033">
    <property type="term" value="P:tRNA processing"/>
    <property type="evidence" value="ECO:0007669"/>
    <property type="project" value="UniProtKB-KW"/>
</dbReference>
<dbReference type="CDD" id="cd10845">
    <property type="entry name" value="DSRM_RNAse_III_family"/>
    <property type="match status" value="1"/>
</dbReference>
<dbReference type="CDD" id="cd00593">
    <property type="entry name" value="RIBOc"/>
    <property type="match status" value="1"/>
</dbReference>
<dbReference type="FunFam" id="1.10.1520.10:FF:000001">
    <property type="entry name" value="Ribonuclease 3"/>
    <property type="match status" value="1"/>
</dbReference>
<dbReference type="Gene3D" id="3.30.160.20">
    <property type="match status" value="1"/>
</dbReference>
<dbReference type="Gene3D" id="1.10.1520.10">
    <property type="entry name" value="Ribonuclease III domain"/>
    <property type="match status" value="1"/>
</dbReference>
<dbReference type="HAMAP" id="MF_00104">
    <property type="entry name" value="RNase_III"/>
    <property type="match status" value="1"/>
</dbReference>
<dbReference type="InterPro" id="IPR014720">
    <property type="entry name" value="dsRBD_dom"/>
</dbReference>
<dbReference type="InterPro" id="IPR011907">
    <property type="entry name" value="RNase_III"/>
</dbReference>
<dbReference type="InterPro" id="IPR000999">
    <property type="entry name" value="RNase_III_dom"/>
</dbReference>
<dbReference type="InterPro" id="IPR036389">
    <property type="entry name" value="RNase_III_sf"/>
</dbReference>
<dbReference type="NCBIfam" id="TIGR02191">
    <property type="entry name" value="RNaseIII"/>
    <property type="match status" value="1"/>
</dbReference>
<dbReference type="PANTHER" id="PTHR11207:SF0">
    <property type="entry name" value="RIBONUCLEASE 3"/>
    <property type="match status" value="1"/>
</dbReference>
<dbReference type="PANTHER" id="PTHR11207">
    <property type="entry name" value="RIBONUCLEASE III"/>
    <property type="match status" value="1"/>
</dbReference>
<dbReference type="Pfam" id="PF00035">
    <property type="entry name" value="dsrm"/>
    <property type="match status" value="1"/>
</dbReference>
<dbReference type="Pfam" id="PF14622">
    <property type="entry name" value="Ribonucleas_3_3"/>
    <property type="match status" value="1"/>
</dbReference>
<dbReference type="SMART" id="SM00358">
    <property type="entry name" value="DSRM"/>
    <property type="match status" value="1"/>
</dbReference>
<dbReference type="SMART" id="SM00535">
    <property type="entry name" value="RIBOc"/>
    <property type="match status" value="1"/>
</dbReference>
<dbReference type="SUPFAM" id="SSF54768">
    <property type="entry name" value="dsRNA-binding domain-like"/>
    <property type="match status" value="1"/>
</dbReference>
<dbReference type="SUPFAM" id="SSF69065">
    <property type="entry name" value="RNase III domain-like"/>
    <property type="match status" value="1"/>
</dbReference>
<dbReference type="PROSITE" id="PS50137">
    <property type="entry name" value="DS_RBD"/>
    <property type="match status" value="1"/>
</dbReference>
<dbReference type="PROSITE" id="PS00517">
    <property type="entry name" value="RNASE_3_1"/>
    <property type="match status" value="1"/>
</dbReference>
<dbReference type="PROSITE" id="PS50142">
    <property type="entry name" value="RNASE_3_2"/>
    <property type="match status" value="1"/>
</dbReference>
<protein>
    <recommendedName>
        <fullName evidence="1">Ribonuclease 3</fullName>
        <ecNumber evidence="1">3.1.26.3</ecNumber>
    </recommendedName>
    <alternativeName>
        <fullName evidence="1">Ribonuclease III</fullName>
        <shortName evidence="1">RNase III</shortName>
    </alternativeName>
</protein>
<reference key="1">
    <citation type="journal article" date="2006" name="Proc. Natl. Acad. Sci. U.S.A.">
        <title>Comparative genomics of the lactic acid bacteria.</title>
        <authorList>
            <person name="Makarova K.S."/>
            <person name="Slesarev A."/>
            <person name="Wolf Y.I."/>
            <person name="Sorokin A."/>
            <person name="Mirkin B."/>
            <person name="Koonin E.V."/>
            <person name="Pavlov A."/>
            <person name="Pavlova N."/>
            <person name="Karamychev V."/>
            <person name="Polouchine N."/>
            <person name="Shakhova V."/>
            <person name="Grigoriev I."/>
            <person name="Lou Y."/>
            <person name="Rohksar D."/>
            <person name="Lucas S."/>
            <person name="Huang K."/>
            <person name="Goodstein D.M."/>
            <person name="Hawkins T."/>
            <person name="Plengvidhya V."/>
            <person name="Welker D."/>
            <person name="Hughes J."/>
            <person name="Goh Y."/>
            <person name="Benson A."/>
            <person name="Baldwin K."/>
            <person name="Lee J.-H."/>
            <person name="Diaz-Muniz I."/>
            <person name="Dosti B."/>
            <person name="Smeianov V."/>
            <person name="Wechter W."/>
            <person name="Barabote R."/>
            <person name="Lorca G."/>
            <person name="Altermann E."/>
            <person name="Barrangou R."/>
            <person name="Ganesan B."/>
            <person name="Xie Y."/>
            <person name="Rawsthorne H."/>
            <person name="Tamir D."/>
            <person name="Parker C."/>
            <person name="Breidt F."/>
            <person name="Broadbent J.R."/>
            <person name="Hutkins R."/>
            <person name="O'Sullivan D."/>
            <person name="Steele J."/>
            <person name="Unlu G."/>
            <person name="Saier M.H. Jr."/>
            <person name="Klaenhammer T."/>
            <person name="Richardson P."/>
            <person name="Kozyavkin S."/>
            <person name="Weimer B.C."/>
            <person name="Mills D.A."/>
        </authorList>
    </citation>
    <scope>NUCLEOTIDE SEQUENCE [LARGE SCALE GENOMIC DNA]</scope>
    <source>
        <strain>ATCC 8293 / DSM 20343 / BCRC 11652 / CCM 1803 / JCM 6124 / NCDO 523 / NBRC 100496 / NCIMB 8023 / NCTC 12954 / NRRL B-1118 / 37Y</strain>
    </source>
</reference>
<gene>
    <name evidence="1" type="primary">rnc</name>
    <name type="ordered locus">LEUM_1565</name>
</gene>
<evidence type="ECO:0000255" key="1">
    <source>
        <dbReference type="HAMAP-Rule" id="MF_00104"/>
    </source>
</evidence>
<feature type="chain" id="PRO_1000075775" description="Ribonuclease 3">
    <location>
        <begin position="1"/>
        <end position="236"/>
    </location>
</feature>
<feature type="domain" description="RNase III" evidence="1">
    <location>
        <begin position="7"/>
        <end position="136"/>
    </location>
</feature>
<feature type="domain" description="DRBM" evidence="1">
    <location>
        <begin position="162"/>
        <end position="232"/>
    </location>
</feature>
<feature type="active site" evidence="1">
    <location>
        <position position="53"/>
    </location>
</feature>
<feature type="active site" evidence="1">
    <location>
        <position position="125"/>
    </location>
</feature>
<feature type="binding site" evidence="1">
    <location>
        <position position="49"/>
    </location>
    <ligand>
        <name>Mg(2+)</name>
        <dbReference type="ChEBI" id="CHEBI:18420"/>
    </ligand>
</feature>
<feature type="binding site" evidence="1">
    <location>
        <position position="122"/>
    </location>
    <ligand>
        <name>Mg(2+)</name>
        <dbReference type="ChEBI" id="CHEBI:18420"/>
    </ligand>
</feature>
<feature type="binding site" evidence="1">
    <location>
        <position position="125"/>
    </location>
    <ligand>
        <name>Mg(2+)</name>
        <dbReference type="ChEBI" id="CHEBI:18420"/>
    </ligand>
</feature>
<sequence length="236" mass="27277">MSQDSFKSYILKKFNISFNDESLLTEALTQRNYLNEHPDEKGRDYQRLEFLGDSVMQMIVAEYLFKRYPDWHEGQLTEMRIAMVQTRSFAHFSRMVHLNEGIRLGKGEEMSGARDRDSLLEDIWEAFIGALYLDQGADVVRQFLNQTLFAAIDTDFFDRFIDFKSRLQERLQTKGSVDIDYQTEKEEQLSDNTQLFEASVSANDKELARGTGKSIKDAEKAAARAALKILEDNVNL</sequence>
<proteinExistence type="inferred from homology"/>
<organism>
    <name type="scientific">Leuconostoc mesenteroides subsp. mesenteroides (strain ATCC 8293 / DSM 20343 / BCRC 11652 / CCM 1803 / JCM 6124 / NCDO 523 / NBRC 100496 / NCIMB 8023 / NCTC 12954 / NRRL B-1118 / 37Y)</name>
    <dbReference type="NCBI Taxonomy" id="203120"/>
    <lineage>
        <taxon>Bacteria</taxon>
        <taxon>Bacillati</taxon>
        <taxon>Bacillota</taxon>
        <taxon>Bacilli</taxon>
        <taxon>Lactobacillales</taxon>
        <taxon>Lactobacillaceae</taxon>
        <taxon>Leuconostoc</taxon>
    </lineage>
</organism>